<organism>
    <name type="scientific">Shigella boydii serotype 18 (strain CDC 3083-94 / BS512)</name>
    <dbReference type="NCBI Taxonomy" id="344609"/>
    <lineage>
        <taxon>Bacteria</taxon>
        <taxon>Pseudomonadati</taxon>
        <taxon>Pseudomonadota</taxon>
        <taxon>Gammaproteobacteria</taxon>
        <taxon>Enterobacterales</taxon>
        <taxon>Enterobacteriaceae</taxon>
        <taxon>Shigella</taxon>
    </lineage>
</organism>
<comment type="function">
    <text evidence="1">Part of the Sec protein translocase complex. Interacts with the SecYEG preprotein conducting channel. Has a central role in coupling the hydrolysis of ATP to the transfer of proteins into and across the cell membrane, serving both as a receptor for the preprotein-SecB complex and as an ATP-driven molecular motor driving the stepwise translocation of polypeptide chains across the membrane.</text>
</comment>
<comment type="catalytic activity">
    <reaction evidence="1">
        <text>ATP + H2O + cellular proteinSide 1 = ADP + phosphate + cellular proteinSide 2.</text>
        <dbReference type="EC" id="7.4.2.8"/>
    </reaction>
</comment>
<comment type="cofactor">
    <cofactor evidence="1">
        <name>Zn(2+)</name>
        <dbReference type="ChEBI" id="CHEBI:29105"/>
    </cofactor>
    <text evidence="1">May bind 1 zinc ion per subunit.</text>
</comment>
<comment type="subunit">
    <text evidence="1">Monomer and homodimer. Part of the essential Sec protein translocation apparatus which comprises SecA, SecYEG and auxiliary proteins SecDF-YajC and YidC.</text>
</comment>
<comment type="subcellular location">
    <subcellularLocation>
        <location evidence="1">Cell inner membrane</location>
        <topology evidence="1">Peripheral membrane protein</topology>
        <orientation evidence="1">Cytoplasmic side</orientation>
    </subcellularLocation>
    <subcellularLocation>
        <location evidence="1">Cytoplasm</location>
    </subcellularLocation>
    <text evidence="1">Distribution is 50-50.</text>
</comment>
<comment type="induction">
    <text evidence="1">Repressed under conditions of excess protein secretion capacity and derepressed when protein secretion becomes limiting. This is regulated by SecM.</text>
</comment>
<comment type="similarity">
    <text evidence="1">Belongs to the SecA family.</text>
</comment>
<sequence>MLIKLLTKVFGSRNDRTLRRMRKVVNIINAMEPEMEKLSDEELKGKTAEFRARLEKGEVLENLIPEAFAVVREASKRVFGMRHFDVQLLGGMVLNERCIAEMRTGEGKTLTATLPAYLNALTGKGVHVVTVNDYLAQRDAENNRPLFEFLGLTVGINLPGMPAPAKREAYAADITYGTNNEYGFDYLRDNMAFSPEERVQRKLHYALVDEVDSILIDEARTPLIISGPAEDSSEMYKRVNKIIPHLIRQEKEDSETFQGEGHFSVDEKSRQVNLTERGLVLIEELLVKEGIMDEGESLYSPANIMLMHHVTAALRAHALFTRDVDYIVKDGEVIIVDEHTGRTMQGRRWSDGLHQAVEAKEGVQIQNENQTLASITFQNYFRLYEKLAGMTGTADTEAFEFSSIYKLDTVVVPTNRPMIRKDLPDLVYMTEAEKIQAIIEDIKERTAKGQPVLVGTISIEKSELVSNELTKAGIKHNVLNAKFHANEAAIVAQAGYPAAVTIATNMAGRGTDIVLGGSWQAEVAALENPTAEQIEKIKADWQVRHDAVLEAGGLHIIGTERHESRRIDNQLRGRSGRQGDAGSSRFYLSMEDALMRIFASDRVSGMMRKLGMKPGEAIEHPWVTKAIANAQRKVESRNFDIRKQLLEYDDVANDQRRAIYSQRNELLDVSDVSETINSIREDVFKATIDAYIPPQSLEEMWDIPGLQERLKNDFDLDLPIAEWLDKEPELHEETLRERILAQSIEVYQRKEEVVGAEMMRHFEKGVMLQTLDSLWKEHLAAMDYLRQGIHLRGYAQKDPKQEYKRESFSMFAAMLESLKYEVISTLSKVQVRMPEEVEELEQQRRMEAERLAQMQQLSHQDDDSAAAAALAAQTGERKVGRNDPCPCGSGKKYKQCHGRLQ</sequence>
<accession>B2U2A4</accession>
<dbReference type="EC" id="7.4.2.8" evidence="1"/>
<dbReference type="EMBL" id="CP001063">
    <property type="protein sequence ID" value="ACD07504.1"/>
    <property type="molecule type" value="Genomic_DNA"/>
</dbReference>
<dbReference type="RefSeq" id="WP_000905789.1">
    <property type="nucleotide sequence ID" value="NC_010658.1"/>
</dbReference>
<dbReference type="SMR" id="B2U2A4"/>
<dbReference type="STRING" id="344609.SbBS512_E0092"/>
<dbReference type="GeneID" id="93777336"/>
<dbReference type="KEGG" id="sbc:SbBS512_E0092"/>
<dbReference type="HOGENOM" id="CLU_005314_3_0_6"/>
<dbReference type="Proteomes" id="UP000001030">
    <property type="component" value="Chromosome"/>
</dbReference>
<dbReference type="GO" id="GO:0031522">
    <property type="term" value="C:cell envelope Sec protein transport complex"/>
    <property type="evidence" value="ECO:0007669"/>
    <property type="project" value="TreeGrafter"/>
</dbReference>
<dbReference type="GO" id="GO:0005829">
    <property type="term" value="C:cytosol"/>
    <property type="evidence" value="ECO:0007669"/>
    <property type="project" value="TreeGrafter"/>
</dbReference>
<dbReference type="GO" id="GO:0005886">
    <property type="term" value="C:plasma membrane"/>
    <property type="evidence" value="ECO:0007669"/>
    <property type="project" value="UniProtKB-SubCell"/>
</dbReference>
<dbReference type="GO" id="GO:0005524">
    <property type="term" value="F:ATP binding"/>
    <property type="evidence" value="ECO:0007669"/>
    <property type="project" value="UniProtKB-UniRule"/>
</dbReference>
<dbReference type="GO" id="GO:0046872">
    <property type="term" value="F:metal ion binding"/>
    <property type="evidence" value="ECO:0007669"/>
    <property type="project" value="UniProtKB-KW"/>
</dbReference>
<dbReference type="GO" id="GO:0008564">
    <property type="term" value="F:protein-exporting ATPase activity"/>
    <property type="evidence" value="ECO:0007669"/>
    <property type="project" value="UniProtKB-EC"/>
</dbReference>
<dbReference type="GO" id="GO:0065002">
    <property type="term" value="P:intracellular protein transmembrane transport"/>
    <property type="evidence" value="ECO:0007669"/>
    <property type="project" value="UniProtKB-UniRule"/>
</dbReference>
<dbReference type="GO" id="GO:0017038">
    <property type="term" value="P:protein import"/>
    <property type="evidence" value="ECO:0007669"/>
    <property type="project" value="InterPro"/>
</dbReference>
<dbReference type="GO" id="GO:0006605">
    <property type="term" value="P:protein targeting"/>
    <property type="evidence" value="ECO:0007669"/>
    <property type="project" value="UniProtKB-UniRule"/>
</dbReference>
<dbReference type="GO" id="GO:0043952">
    <property type="term" value="P:protein transport by the Sec complex"/>
    <property type="evidence" value="ECO:0007669"/>
    <property type="project" value="TreeGrafter"/>
</dbReference>
<dbReference type="CDD" id="cd17928">
    <property type="entry name" value="DEXDc_SecA"/>
    <property type="match status" value="1"/>
</dbReference>
<dbReference type="CDD" id="cd18803">
    <property type="entry name" value="SF2_C_secA"/>
    <property type="match status" value="1"/>
</dbReference>
<dbReference type="FunFam" id="1.10.3060.10:FF:000001">
    <property type="entry name" value="Preprotein translocase subunit SecA"/>
    <property type="match status" value="1"/>
</dbReference>
<dbReference type="FunFam" id="3.40.50.300:FF:000081">
    <property type="entry name" value="Preprotein translocase subunit SecA"/>
    <property type="match status" value="1"/>
</dbReference>
<dbReference type="FunFam" id="3.40.50.300:FF:000113">
    <property type="entry name" value="Preprotein translocase subunit SecA"/>
    <property type="match status" value="1"/>
</dbReference>
<dbReference type="FunFam" id="3.90.1440.10:FF:000001">
    <property type="entry name" value="Preprotein translocase subunit SecA"/>
    <property type="match status" value="1"/>
</dbReference>
<dbReference type="Gene3D" id="1.10.3060.10">
    <property type="entry name" value="Helical scaffold and wing domains of SecA"/>
    <property type="match status" value="1"/>
</dbReference>
<dbReference type="Gene3D" id="3.40.50.300">
    <property type="entry name" value="P-loop containing nucleotide triphosphate hydrolases"/>
    <property type="match status" value="2"/>
</dbReference>
<dbReference type="Gene3D" id="3.90.1440.10">
    <property type="entry name" value="SecA, preprotein cross-linking domain"/>
    <property type="match status" value="1"/>
</dbReference>
<dbReference type="HAMAP" id="MF_01382">
    <property type="entry name" value="SecA"/>
    <property type="match status" value="1"/>
</dbReference>
<dbReference type="InterPro" id="IPR014001">
    <property type="entry name" value="Helicase_ATP-bd"/>
</dbReference>
<dbReference type="InterPro" id="IPR001650">
    <property type="entry name" value="Helicase_C-like"/>
</dbReference>
<dbReference type="InterPro" id="IPR027417">
    <property type="entry name" value="P-loop_NTPase"/>
</dbReference>
<dbReference type="InterPro" id="IPR004027">
    <property type="entry name" value="SEC_C_motif"/>
</dbReference>
<dbReference type="InterPro" id="IPR000185">
    <property type="entry name" value="SecA"/>
</dbReference>
<dbReference type="InterPro" id="IPR020937">
    <property type="entry name" value="SecA_CS"/>
</dbReference>
<dbReference type="InterPro" id="IPR011115">
    <property type="entry name" value="SecA_DEAD"/>
</dbReference>
<dbReference type="InterPro" id="IPR014018">
    <property type="entry name" value="SecA_motor_DEAD"/>
</dbReference>
<dbReference type="InterPro" id="IPR011130">
    <property type="entry name" value="SecA_preprotein_X-link_dom"/>
</dbReference>
<dbReference type="InterPro" id="IPR044722">
    <property type="entry name" value="SecA_SF2_C"/>
</dbReference>
<dbReference type="InterPro" id="IPR011116">
    <property type="entry name" value="SecA_Wing/Scaffold"/>
</dbReference>
<dbReference type="InterPro" id="IPR036266">
    <property type="entry name" value="SecA_Wing/Scaffold_sf"/>
</dbReference>
<dbReference type="InterPro" id="IPR036670">
    <property type="entry name" value="SecA_X-link_sf"/>
</dbReference>
<dbReference type="NCBIfam" id="NF009538">
    <property type="entry name" value="PRK12904.1"/>
    <property type="match status" value="1"/>
</dbReference>
<dbReference type="NCBIfam" id="TIGR00963">
    <property type="entry name" value="secA"/>
    <property type="match status" value="1"/>
</dbReference>
<dbReference type="PANTHER" id="PTHR30612:SF0">
    <property type="entry name" value="CHLOROPLAST PROTEIN-TRANSPORTING ATPASE"/>
    <property type="match status" value="1"/>
</dbReference>
<dbReference type="PANTHER" id="PTHR30612">
    <property type="entry name" value="SECA INNER MEMBRANE COMPONENT OF SEC PROTEIN SECRETION SYSTEM"/>
    <property type="match status" value="1"/>
</dbReference>
<dbReference type="Pfam" id="PF21090">
    <property type="entry name" value="P-loop_SecA"/>
    <property type="match status" value="1"/>
</dbReference>
<dbReference type="Pfam" id="PF02810">
    <property type="entry name" value="SEC-C"/>
    <property type="match status" value="1"/>
</dbReference>
<dbReference type="Pfam" id="PF07517">
    <property type="entry name" value="SecA_DEAD"/>
    <property type="match status" value="1"/>
</dbReference>
<dbReference type="Pfam" id="PF01043">
    <property type="entry name" value="SecA_PP_bind"/>
    <property type="match status" value="1"/>
</dbReference>
<dbReference type="Pfam" id="PF07516">
    <property type="entry name" value="SecA_SW"/>
    <property type="match status" value="1"/>
</dbReference>
<dbReference type="PRINTS" id="PR00906">
    <property type="entry name" value="SECA"/>
</dbReference>
<dbReference type="SMART" id="SM00957">
    <property type="entry name" value="SecA_DEAD"/>
    <property type="match status" value="1"/>
</dbReference>
<dbReference type="SMART" id="SM00958">
    <property type="entry name" value="SecA_PP_bind"/>
    <property type="match status" value="1"/>
</dbReference>
<dbReference type="SUPFAM" id="SSF81886">
    <property type="entry name" value="Helical scaffold and wing domains of SecA"/>
    <property type="match status" value="1"/>
</dbReference>
<dbReference type="SUPFAM" id="SSF52540">
    <property type="entry name" value="P-loop containing nucleoside triphosphate hydrolases"/>
    <property type="match status" value="2"/>
</dbReference>
<dbReference type="SUPFAM" id="SSF81767">
    <property type="entry name" value="Pre-protein crosslinking domain of SecA"/>
    <property type="match status" value="1"/>
</dbReference>
<dbReference type="PROSITE" id="PS01312">
    <property type="entry name" value="SECA"/>
    <property type="match status" value="1"/>
</dbReference>
<dbReference type="PROSITE" id="PS51196">
    <property type="entry name" value="SECA_MOTOR_DEAD"/>
    <property type="match status" value="1"/>
</dbReference>
<keyword id="KW-0067">ATP-binding</keyword>
<keyword id="KW-0997">Cell inner membrane</keyword>
<keyword id="KW-1003">Cell membrane</keyword>
<keyword id="KW-0963">Cytoplasm</keyword>
<keyword id="KW-0472">Membrane</keyword>
<keyword id="KW-0479">Metal-binding</keyword>
<keyword id="KW-0547">Nucleotide-binding</keyword>
<keyword id="KW-0653">Protein transport</keyword>
<keyword id="KW-1185">Reference proteome</keyword>
<keyword id="KW-1278">Translocase</keyword>
<keyword id="KW-0811">Translocation</keyword>
<keyword id="KW-0813">Transport</keyword>
<keyword id="KW-0862">Zinc</keyword>
<reference key="1">
    <citation type="submission" date="2008-05" db="EMBL/GenBank/DDBJ databases">
        <title>Complete sequence of Shigella boydii serotype 18 strain BS512.</title>
        <authorList>
            <person name="Rasko D.A."/>
            <person name="Rosovitz M."/>
            <person name="Maurelli A.T."/>
            <person name="Myers G."/>
            <person name="Seshadri R."/>
            <person name="Cer R."/>
            <person name="Jiang L."/>
            <person name="Ravel J."/>
            <person name="Sebastian Y."/>
        </authorList>
    </citation>
    <scope>NUCLEOTIDE SEQUENCE [LARGE SCALE GENOMIC DNA]</scope>
    <source>
        <strain>CDC 3083-94 / BS512</strain>
    </source>
</reference>
<evidence type="ECO:0000255" key="1">
    <source>
        <dbReference type="HAMAP-Rule" id="MF_01382"/>
    </source>
</evidence>
<evidence type="ECO:0000256" key="2">
    <source>
        <dbReference type="SAM" id="MobiDB-lite"/>
    </source>
</evidence>
<name>SECA_SHIB3</name>
<protein>
    <recommendedName>
        <fullName evidence="1">Protein translocase subunit SecA</fullName>
        <ecNumber evidence="1">7.4.2.8</ecNumber>
    </recommendedName>
</protein>
<gene>
    <name evidence="1" type="primary">secA</name>
    <name type="ordered locus">SbBS512_E0092</name>
</gene>
<feature type="chain" id="PRO_1000145063" description="Protein translocase subunit SecA">
    <location>
        <begin position="1"/>
        <end position="901"/>
    </location>
</feature>
<feature type="region of interest" description="Disordered" evidence="2">
    <location>
        <begin position="859"/>
        <end position="901"/>
    </location>
</feature>
<feature type="compositionally biased region" description="Basic residues" evidence="2">
    <location>
        <begin position="891"/>
        <end position="901"/>
    </location>
</feature>
<feature type="binding site" evidence="1">
    <location>
        <position position="87"/>
    </location>
    <ligand>
        <name>ATP</name>
        <dbReference type="ChEBI" id="CHEBI:30616"/>
    </ligand>
</feature>
<feature type="binding site" evidence="1">
    <location>
        <begin position="105"/>
        <end position="109"/>
    </location>
    <ligand>
        <name>ATP</name>
        <dbReference type="ChEBI" id="CHEBI:30616"/>
    </ligand>
</feature>
<feature type="binding site" evidence="1">
    <location>
        <position position="512"/>
    </location>
    <ligand>
        <name>ATP</name>
        <dbReference type="ChEBI" id="CHEBI:30616"/>
    </ligand>
</feature>
<feature type="binding site" evidence="1">
    <location>
        <position position="885"/>
    </location>
    <ligand>
        <name>Zn(2+)</name>
        <dbReference type="ChEBI" id="CHEBI:29105"/>
    </ligand>
</feature>
<feature type="binding site" evidence="1">
    <location>
        <position position="887"/>
    </location>
    <ligand>
        <name>Zn(2+)</name>
        <dbReference type="ChEBI" id="CHEBI:29105"/>
    </ligand>
</feature>
<feature type="binding site" evidence="1">
    <location>
        <position position="896"/>
    </location>
    <ligand>
        <name>Zn(2+)</name>
        <dbReference type="ChEBI" id="CHEBI:29105"/>
    </ligand>
</feature>
<feature type="binding site" evidence="1">
    <location>
        <position position="897"/>
    </location>
    <ligand>
        <name>Zn(2+)</name>
        <dbReference type="ChEBI" id="CHEBI:29105"/>
    </ligand>
</feature>
<proteinExistence type="inferred from homology"/>